<dbReference type="EC" id="3.4.16.6"/>
<dbReference type="EMBL" id="AACS02000005">
    <property type="protein sequence ID" value="EAU84396.1"/>
    <property type="molecule type" value="Genomic_DNA"/>
</dbReference>
<dbReference type="RefSeq" id="XP_001837480.1">
    <property type="nucleotide sequence ID" value="XM_001837428.2"/>
</dbReference>
<dbReference type="SMR" id="A8NYP0"/>
<dbReference type="FunCoup" id="A8NYP0">
    <property type="interactions" value="229"/>
</dbReference>
<dbReference type="STRING" id="240176.A8NYP0"/>
<dbReference type="ESTHER" id="copc7-kex1">
    <property type="family name" value="Carboxypeptidase_S10"/>
</dbReference>
<dbReference type="MEROPS" id="S10.007"/>
<dbReference type="GlyCosmos" id="A8NYP0">
    <property type="glycosylation" value="5 sites, No reported glycans"/>
</dbReference>
<dbReference type="GeneID" id="6014036"/>
<dbReference type="KEGG" id="cci:CC1G_01392"/>
<dbReference type="VEuPathDB" id="FungiDB:CC1G_01392"/>
<dbReference type="eggNOG" id="KOG1282">
    <property type="taxonomic scope" value="Eukaryota"/>
</dbReference>
<dbReference type="HOGENOM" id="CLU_008523_11_1_1"/>
<dbReference type="InParanoid" id="A8NYP0"/>
<dbReference type="OMA" id="EMADQFV"/>
<dbReference type="OrthoDB" id="443318at2759"/>
<dbReference type="Proteomes" id="UP000001861">
    <property type="component" value="Unassembled WGS sequence"/>
</dbReference>
<dbReference type="GO" id="GO:0016020">
    <property type="term" value="C:membrane"/>
    <property type="evidence" value="ECO:0007669"/>
    <property type="project" value="UniProtKB-KW"/>
</dbReference>
<dbReference type="GO" id="GO:0005802">
    <property type="term" value="C:trans-Golgi network"/>
    <property type="evidence" value="ECO:0007669"/>
    <property type="project" value="TreeGrafter"/>
</dbReference>
<dbReference type="GO" id="GO:0004185">
    <property type="term" value="F:serine-type carboxypeptidase activity"/>
    <property type="evidence" value="ECO:0007669"/>
    <property type="project" value="UniProtKB-EC"/>
</dbReference>
<dbReference type="GO" id="GO:0006915">
    <property type="term" value="P:apoptotic process"/>
    <property type="evidence" value="ECO:0007669"/>
    <property type="project" value="UniProtKB-KW"/>
</dbReference>
<dbReference type="GO" id="GO:0006508">
    <property type="term" value="P:proteolysis"/>
    <property type="evidence" value="ECO:0007669"/>
    <property type="project" value="UniProtKB-KW"/>
</dbReference>
<dbReference type="FunFam" id="3.40.50.1820:FF:000121">
    <property type="entry name" value="Carboxypeptidase D"/>
    <property type="match status" value="1"/>
</dbReference>
<dbReference type="Gene3D" id="3.40.50.1820">
    <property type="entry name" value="alpha/beta hydrolase"/>
    <property type="match status" value="1"/>
</dbReference>
<dbReference type="InterPro" id="IPR029058">
    <property type="entry name" value="AB_hydrolase_fold"/>
</dbReference>
<dbReference type="InterPro" id="IPR001563">
    <property type="entry name" value="Peptidase_S10"/>
</dbReference>
<dbReference type="InterPro" id="IPR033124">
    <property type="entry name" value="Ser_caboxypep_his_AS"/>
</dbReference>
<dbReference type="PANTHER" id="PTHR11802:SF190">
    <property type="entry name" value="PHEROMONE-PROCESSING CARBOXYPEPTIDASE KEX1"/>
    <property type="match status" value="1"/>
</dbReference>
<dbReference type="PANTHER" id="PTHR11802">
    <property type="entry name" value="SERINE PROTEASE FAMILY S10 SERINE CARBOXYPEPTIDASE"/>
    <property type="match status" value="1"/>
</dbReference>
<dbReference type="Pfam" id="PF00450">
    <property type="entry name" value="Peptidase_S10"/>
    <property type="match status" value="1"/>
</dbReference>
<dbReference type="PRINTS" id="PR00724">
    <property type="entry name" value="CRBOXYPTASEC"/>
</dbReference>
<dbReference type="SUPFAM" id="SSF53474">
    <property type="entry name" value="alpha/beta-Hydrolases"/>
    <property type="match status" value="1"/>
</dbReference>
<dbReference type="PROSITE" id="PS00560">
    <property type="entry name" value="CARBOXYPEPT_SER_HIS"/>
    <property type="match status" value="1"/>
</dbReference>
<protein>
    <recommendedName>
        <fullName>Pheromone-processing carboxypeptidase KEX1</fullName>
        <ecNumber>3.4.16.6</ecNumber>
    </recommendedName>
    <alternativeName>
        <fullName>Carboxypeptidase D</fullName>
    </alternativeName>
</protein>
<sequence length="618" mass="68888">MLSAIWTGFVTLFLCSFVQGAPADNVLPSAASFYVPSIPGIIPNPDYRLQIYAGHLPAESNKTLLASNDVTAHLYFVMVKNRRVADKERVVFWFNGGPGCSSFDGLMMEVGPWRWDGQPEGKESFIVKEGGWEEYTTMVFVDQPPGTGFSFTSTDQYAKTMKDAQWHILEFLRNFYQVFPEVLTMDTYLAGESFAGQWIPYFADAILESSLQIPLRGIAIGNGWMDARRQYLSYLDYSLKMGLIKDNSEDWKEVKAAHDRCEAHLEKLEGDPIHIRECGSIIMKVINQKRPDNEKGEKMCLNMYDVRFTDTSPACGLNWPPEMHAITHFLGRKDVVRALHAERHPGSWVECRRPVHRAFKDGEEESSITVLPRVLSKIPVLIFAGDQDLICNYVGLENMIKSLTWNGETGLGTVETQSWSVNSTATGTWVESRNLTYVKIFNASHMAPFDLPHVTHDMMLRFMGVNFSSIVGGSAMIPSSLGDAAKPVFVGGHLPQPSTPALPAGKTPEQDKAMWEAYYNAGSAALVLVLIMLVIGLFIWYRRRKSRLQLPSNQSGELAEESIPLRSEMEDRGGNGVSNGGAWKGKARASEPVFEVGDSDEDEPSPYRKPDGGGDRNV</sequence>
<proteinExistence type="inferred from homology"/>
<name>KEX1_COPC7</name>
<evidence type="ECO:0000250" key="1"/>
<evidence type="ECO:0000255" key="2"/>
<evidence type="ECO:0000255" key="3">
    <source>
        <dbReference type="PROSITE-ProRule" id="PRU10075"/>
    </source>
</evidence>
<evidence type="ECO:0000256" key="4">
    <source>
        <dbReference type="SAM" id="MobiDB-lite"/>
    </source>
</evidence>
<evidence type="ECO:0000305" key="5"/>
<reference key="1">
    <citation type="journal article" date="2010" name="Proc. Natl. Acad. Sci. U.S.A.">
        <title>Insights into evolution of multicellular fungi from the assembled chromosomes of the mushroom Coprinopsis cinerea (Coprinus cinereus).</title>
        <authorList>
            <person name="Stajich J.E."/>
            <person name="Wilke S.K."/>
            <person name="Ahren D."/>
            <person name="Au C.H."/>
            <person name="Birren B.W."/>
            <person name="Borodovsky M."/>
            <person name="Burns C."/>
            <person name="Canbaeck B."/>
            <person name="Casselton L.A."/>
            <person name="Cheng C.K."/>
            <person name="Deng J."/>
            <person name="Dietrich F.S."/>
            <person name="Fargo D.C."/>
            <person name="Farman M.L."/>
            <person name="Gathman A.C."/>
            <person name="Goldberg J."/>
            <person name="Guigo R."/>
            <person name="Hoegger P.J."/>
            <person name="Hooker J.B."/>
            <person name="Huggins A."/>
            <person name="James T.Y."/>
            <person name="Kamada T."/>
            <person name="Kilaru S."/>
            <person name="Kodira C."/>
            <person name="Kuees U."/>
            <person name="Kupfer D."/>
            <person name="Kwan H.S."/>
            <person name="Lomsadze A."/>
            <person name="Li W."/>
            <person name="Lilly W.W."/>
            <person name="Ma L.-J."/>
            <person name="Mackey A.J."/>
            <person name="Manning G."/>
            <person name="Martin F."/>
            <person name="Muraguchi H."/>
            <person name="Natvig D.O."/>
            <person name="Palmerini H."/>
            <person name="Ramesh M.A."/>
            <person name="Rehmeyer C.J."/>
            <person name="Roe B.A."/>
            <person name="Shenoy N."/>
            <person name="Stanke M."/>
            <person name="Ter-Hovhannisyan V."/>
            <person name="Tunlid A."/>
            <person name="Velagapudi R."/>
            <person name="Vision T.J."/>
            <person name="Zeng Q."/>
            <person name="Zolan M.E."/>
            <person name="Pukkila P.J."/>
        </authorList>
    </citation>
    <scope>NUCLEOTIDE SEQUENCE [LARGE SCALE GENOMIC DNA]</scope>
    <source>
        <strain>Okayama-7 / 130 / ATCC MYA-4618 / FGSC 9003</strain>
    </source>
</reference>
<organism>
    <name type="scientific">Coprinopsis cinerea (strain Okayama-7 / 130 / ATCC MYA-4618 / FGSC 9003)</name>
    <name type="common">Inky cap fungus</name>
    <name type="synonym">Hormographiella aspergillata</name>
    <dbReference type="NCBI Taxonomy" id="240176"/>
    <lineage>
        <taxon>Eukaryota</taxon>
        <taxon>Fungi</taxon>
        <taxon>Dikarya</taxon>
        <taxon>Basidiomycota</taxon>
        <taxon>Agaricomycotina</taxon>
        <taxon>Agaricomycetes</taxon>
        <taxon>Agaricomycetidae</taxon>
        <taxon>Agaricales</taxon>
        <taxon>Agaricineae</taxon>
        <taxon>Psathyrellaceae</taxon>
        <taxon>Coprinopsis</taxon>
    </lineage>
</organism>
<gene>
    <name type="primary">KEX1</name>
    <name type="ORF">CC1G_01392</name>
</gene>
<keyword id="KW-0053">Apoptosis</keyword>
<keyword id="KW-0121">Carboxypeptidase</keyword>
<keyword id="KW-0325">Glycoprotein</keyword>
<keyword id="KW-0333">Golgi apparatus</keyword>
<keyword id="KW-0378">Hydrolase</keyword>
<keyword id="KW-0472">Membrane</keyword>
<keyword id="KW-0645">Protease</keyword>
<keyword id="KW-1185">Reference proteome</keyword>
<keyword id="KW-0732">Signal</keyword>
<keyword id="KW-0812">Transmembrane</keyword>
<keyword id="KW-1133">Transmembrane helix</keyword>
<feature type="signal peptide" evidence="2">
    <location>
        <begin position="1"/>
        <end position="23"/>
    </location>
</feature>
<feature type="chain" id="PRO_0000411917" description="Pheromone-processing carboxypeptidase KEX1">
    <location>
        <begin position="24"/>
        <end position="618"/>
    </location>
</feature>
<feature type="topological domain" description="Lumenal" evidence="2">
    <location>
        <begin position="24"/>
        <end position="520"/>
    </location>
</feature>
<feature type="transmembrane region" description="Helical" evidence="2">
    <location>
        <begin position="521"/>
        <end position="541"/>
    </location>
</feature>
<feature type="topological domain" description="Cytoplasmic" evidence="2">
    <location>
        <begin position="542"/>
        <end position="618"/>
    </location>
</feature>
<feature type="region of interest" description="Disordered" evidence="4">
    <location>
        <begin position="551"/>
        <end position="618"/>
    </location>
</feature>
<feature type="compositionally biased region" description="Gly residues" evidence="4">
    <location>
        <begin position="574"/>
        <end position="583"/>
    </location>
</feature>
<feature type="compositionally biased region" description="Basic and acidic residues" evidence="4">
    <location>
        <begin position="605"/>
        <end position="618"/>
    </location>
</feature>
<feature type="active site" evidence="3">
    <location>
        <position position="193"/>
    </location>
</feature>
<feature type="active site" evidence="3">
    <location>
        <position position="388"/>
    </location>
</feature>
<feature type="active site" evidence="3">
    <location>
        <position position="445"/>
    </location>
</feature>
<feature type="glycosylation site" description="N-linked (GlcNAc...) asparagine" evidence="2">
    <location>
        <position position="61"/>
    </location>
</feature>
<feature type="glycosylation site" description="N-linked (GlcNAc...) asparagine" evidence="2">
    <location>
        <position position="422"/>
    </location>
</feature>
<feature type="glycosylation site" description="N-linked (GlcNAc...) asparagine" evidence="2">
    <location>
        <position position="434"/>
    </location>
</feature>
<feature type="glycosylation site" description="N-linked (GlcNAc...) asparagine" evidence="2">
    <location>
        <position position="442"/>
    </location>
</feature>
<feature type="glycosylation site" description="N-linked (GlcNAc...) asparagine" evidence="2">
    <location>
        <position position="466"/>
    </location>
</feature>
<comment type="function">
    <text evidence="1">Protease with a carboxypeptidase B-like function involved in the C-terminal processing of the lysine and arginine residues from protein precursors. Promotes cell fusion and is involved in the programmed cell death (By similarity).</text>
</comment>
<comment type="catalytic activity">
    <reaction>
        <text>Preferential release of a C-terminal arginine or lysine residue.</text>
        <dbReference type="EC" id="3.4.16.6"/>
    </reaction>
</comment>
<comment type="subcellular location">
    <subcellularLocation>
        <location evidence="1">Golgi apparatus</location>
        <location evidence="1">trans-Golgi network membrane</location>
        <topology evidence="1">Single-pass type I membrane protein</topology>
    </subcellularLocation>
</comment>
<comment type="similarity">
    <text evidence="5">Belongs to the peptidase S10 family.</text>
</comment>
<accession>A8NYP0</accession>